<keyword id="KW-0235">DNA replication</keyword>
<keyword id="KW-0240">DNA-directed RNA polymerase</keyword>
<keyword id="KW-0271">Exosome</keyword>
<keyword id="KW-0460">Magnesium</keyword>
<keyword id="KW-0479">Metal-binding</keyword>
<keyword id="KW-0548">Nucleotidyltransferase</keyword>
<keyword id="KW-0639">Primosome</keyword>
<keyword id="KW-0804">Transcription</keyword>
<keyword id="KW-0808">Transferase</keyword>
<name>DNAG_SACI2</name>
<protein>
    <recommendedName>
        <fullName evidence="1">DNA primase DnaG</fullName>
        <ecNumber evidence="1">2.7.7.101</ecNumber>
    </recommendedName>
</protein>
<organism>
    <name type="scientific">Saccharolobus islandicus (strain L.S.2.15 / Lassen #1)</name>
    <name type="common">Sulfolobus islandicus</name>
    <dbReference type="NCBI Taxonomy" id="429572"/>
    <lineage>
        <taxon>Archaea</taxon>
        <taxon>Thermoproteota</taxon>
        <taxon>Thermoprotei</taxon>
        <taxon>Sulfolobales</taxon>
        <taxon>Sulfolobaceae</taxon>
        <taxon>Saccharolobus</taxon>
    </lineage>
</organism>
<comment type="function">
    <text evidence="1">RNA polymerase that catalyzes the synthesis of short RNA molecules used as primers for DNA polymerase during DNA replication. Also part of the exosome, which is a complex involved in RNA degradation. Acts as a poly(A)-binding protein that enhances the interaction between heteromeric, adenine-rich transcripts and the exosome.</text>
</comment>
<comment type="catalytic activity">
    <reaction evidence="1">
        <text>ssDNA + n NTP = ssDNA/pppN(pN)n-1 hybrid + (n-1) diphosphate.</text>
        <dbReference type="EC" id="2.7.7.101"/>
    </reaction>
</comment>
<comment type="cofactor">
    <cofactor evidence="1">
        <name>Mg(2+)</name>
        <dbReference type="ChEBI" id="CHEBI:18420"/>
    </cofactor>
    <text evidence="1">Binds two Mg(2+) per subunit.</text>
</comment>
<comment type="subunit">
    <text evidence="1">Forms a ternary complex with MCM helicase and DNA. Component of the archaeal exosome complex.</text>
</comment>
<comment type="similarity">
    <text evidence="1">Belongs to the archaeal DnaG primase family.</text>
</comment>
<evidence type="ECO:0000255" key="1">
    <source>
        <dbReference type="HAMAP-Rule" id="MF_00007"/>
    </source>
</evidence>
<proteinExistence type="inferred from homology"/>
<gene>
    <name evidence="1" type="primary">dnaG</name>
    <name type="ordered locus">LS215_2206</name>
</gene>
<accession>C3MJP0</accession>
<sequence>MKYDIKLRFEVEGIVEKTDVIGAIFGQTENLFGDEFDLRELQDKGRLGRIIVEIRTKGGKSEGEIIIPSNLDRIETALIAAMVESVDKVGPYNSKFELIEIEDIRAEKLKKIIERAKGILSSWSKEKSLDIKEVINEISSAVKVGEITEYGPERLPAGPDVDKDPNLIIVEGRADVINLLRYGYKNVIAVEGATSRIPETVVSLSKMKKTVIAFLDGDHGGDLILKELLSNNVKIDFVARAPVGREVEELTGKEIAKALSNMMPLTQYLKKIQEAEQAIAKNVIAKEEKPIQLEATQQLVQITLPQNVLEEIKKLPGTLEGVLYDNNWNLIEKVQVRDIIPKLEAYEDNKVAYIVFDGVITQRLLDLASQKNIKMIIGARIGGINKRPQNVDILTFTDIISS</sequence>
<feature type="chain" id="PRO_1000201710" description="DNA primase DnaG">
    <location>
        <begin position="1"/>
        <end position="402"/>
    </location>
</feature>
<feature type="domain" description="Toprim" evidence="1">
    <location>
        <begin position="165"/>
        <end position="243"/>
    </location>
</feature>
<feature type="binding site" evidence="1">
    <location>
        <position position="171"/>
    </location>
    <ligand>
        <name>Mg(2+)</name>
        <dbReference type="ChEBI" id="CHEBI:18420"/>
        <label>1</label>
        <note>catalytic</note>
    </ligand>
</feature>
<feature type="binding site" evidence="1">
    <location>
        <position position="216"/>
    </location>
    <ligand>
        <name>Mg(2+)</name>
        <dbReference type="ChEBI" id="CHEBI:18420"/>
        <label>1</label>
        <note>catalytic</note>
    </ligand>
</feature>
<feature type="binding site" evidence="1">
    <location>
        <position position="216"/>
    </location>
    <ligand>
        <name>Mg(2+)</name>
        <dbReference type="ChEBI" id="CHEBI:18420"/>
        <label>2</label>
    </ligand>
</feature>
<feature type="binding site" evidence="1">
    <location>
        <position position="218"/>
    </location>
    <ligand>
        <name>Mg(2+)</name>
        <dbReference type="ChEBI" id="CHEBI:18420"/>
        <label>2</label>
    </ligand>
</feature>
<reference key="1">
    <citation type="journal article" date="2009" name="Proc. Natl. Acad. Sci. U.S.A.">
        <title>Biogeography of the Sulfolobus islandicus pan-genome.</title>
        <authorList>
            <person name="Reno M.L."/>
            <person name="Held N.L."/>
            <person name="Fields C.J."/>
            <person name="Burke P.V."/>
            <person name="Whitaker R.J."/>
        </authorList>
    </citation>
    <scope>NUCLEOTIDE SEQUENCE [LARGE SCALE GENOMIC DNA]</scope>
    <source>
        <strain>L.S.2.15 / Lassen #1</strain>
    </source>
</reference>
<dbReference type="EC" id="2.7.7.101" evidence="1"/>
<dbReference type="EMBL" id="CP001399">
    <property type="protein sequence ID" value="ACP36193.1"/>
    <property type="molecule type" value="Genomic_DNA"/>
</dbReference>
<dbReference type="RefSeq" id="WP_012712008.1">
    <property type="nucleotide sequence ID" value="NC_012589.1"/>
</dbReference>
<dbReference type="SMR" id="C3MJP0"/>
<dbReference type="GeneID" id="84059392"/>
<dbReference type="KEGG" id="sis:LS215_2206"/>
<dbReference type="HOGENOM" id="CLU_034626_0_0_2"/>
<dbReference type="OrthoDB" id="8643at2157"/>
<dbReference type="Proteomes" id="UP000001747">
    <property type="component" value="Chromosome"/>
</dbReference>
<dbReference type="GO" id="GO:0005737">
    <property type="term" value="C:cytoplasm"/>
    <property type="evidence" value="ECO:0007669"/>
    <property type="project" value="TreeGrafter"/>
</dbReference>
<dbReference type="GO" id="GO:0000428">
    <property type="term" value="C:DNA-directed RNA polymerase complex"/>
    <property type="evidence" value="ECO:0007669"/>
    <property type="project" value="UniProtKB-KW"/>
</dbReference>
<dbReference type="GO" id="GO:0000178">
    <property type="term" value="C:exosome (RNase complex)"/>
    <property type="evidence" value="ECO:0007669"/>
    <property type="project" value="UniProtKB-KW"/>
</dbReference>
<dbReference type="GO" id="GO:1990077">
    <property type="term" value="C:primosome complex"/>
    <property type="evidence" value="ECO:0007669"/>
    <property type="project" value="UniProtKB-KW"/>
</dbReference>
<dbReference type="GO" id="GO:0003899">
    <property type="term" value="F:DNA-directed RNA polymerase activity"/>
    <property type="evidence" value="ECO:0007669"/>
    <property type="project" value="InterPro"/>
</dbReference>
<dbReference type="GO" id="GO:0046872">
    <property type="term" value="F:metal ion binding"/>
    <property type="evidence" value="ECO:0007669"/>
    <property type="project" value="UniProtKB-KW"/>
</dbReference>
<dbReference type="GO" id="GO:0008143">
    <property type="term" value="F:poly(A) binding"/>
    <property type="evidence" value="ECO:0007669"/>
    <property type="project" value="InterPro"/>
</dbReference>
<dbReference type="GO" id="GO:0006269">
    <property type="term" value="P:DNA replication, synthesis of primer"/>
    <property type="evidence" value="ECO:0007669"/>
    <property type="project" value="UniProtKB-UniRule"/>
</dbReference>
<dbReference type="CDD" id="cd01029">
    <property type="entry name" value="TOPRIM_primases"/>
    <property type="match status" value="1"/>
</dbReference>
<dbReference type="FunFam" id="3.40.1360.10:FF:000010">
    <property type="entry name" value="DNA primase DnaG"/>
    <property type="match status" value="1"/>
</dbReference>
<dbReference type="Gene3D" id="3.40.1360.10">
    <property type="match status" value="1"/>
</dbReference>
<dbReference type="HAMAP" id="MF_00007">
    <property type="entry name" value="DNA_primase_DnaG_arc"/>
    <property type="match status" value="1"/>
</dbReference>
<dbReference type="InterPro" id="IPR050219">
    <property type="entry name" value="DnaG_primase"/>
</dbReference>
<dbReference type="InterPro" id="IPR020607">
    <property type="entry name" value="Primase_DnaG_arc"/>
</dbReference>
<dbReference type="InterPro" id="IPR034154">
    <property type="entry name" value="TOPRIM_DnaG/twinkle"/>
</dbReference>
<dbReference type="InterPro" id="IPR006171">
    <property type="entry name" value="TOPRIM_dom"/>
</dbReference>
<dbReference type="NCBIfam" id="NF003108">
    <property type="entry name" value="PRK04031.1-1"/>
    <property type="match status" value="1"/>
</dbReference>
<dbReference type="PANTHER" id="PTHR30313">
    <property type="entry name" value="DNA PRIMASE"/>
    <property type="match status" value="1"/>
</dbReference>
<dbReference type="PANTHER" id="PTHR30313:SF2">
    <property type="entry name" value="DNA PRIMASE"/>
    <property type="match status" value="1"/>
</dbReference>
<dbReference type="Pfam" id="PF13662">
    <property type="entry name" value="Toprim_4"/>
    <property type="match status" value="1"/>
</dbReference>
<dbReference type="SMART" id="SM00493">
    <property type="entry name" value="TOPRIM"/>
    <property type="match status" value="1"/>
</dbReference>
<dbReference type="SUPFAM" id="SSF56731">
    <property type="entry name" value="DNA primase core"/>
    <property type="match status" value="1"/>
</dbReference>
<dbReference type="PROSITE" id="PS50880">
    <property type="entry name" value="TOPRIM"/>
    <property type="match status" value="1"/>
</dbReference>